<dbReference type="EC" id="4.3.2.10" evidence="1"/>
<dbReference type="EMBL" id="CP000678">
    <property type="protein sequence ID" value="ABQ87569.1"/>
    <property type="molecule type" value="Genomic_DNA"/>
</dbReference>
<dbReference type="RefSeq" id="WP_004032549.1">
    <property type="nucleotide sequence ID" value="NZ_CP117965.1"/>
</dbReference>
<dbReference type="SMR" id="A5UMZ1"/>
<dbReference type="STRING" id="420247.Msm_1364"/>
<dbReference type="EnsemblBacteria" id="ABQ87569">
    <property type="protein sequence ID" value="ABQ87569"/>
    <property type="gene ID" value="Msm_1364"/>
</dbReference>
<dbReference type="GeneID" id="78818014"/>
<dbReference type="KEGG" id="msi:Msm_1364"/>
<dbReference type="PATRIC" id="fig|420247.28.peg.1359"/>
<dbReference type="eggNOG" id="arCOG00617">
    <property type="taxonomic scope" value="Archaea"/>
</dbReference>
<dbReference type="HOGENOM" id="CLU_048577_4_0_2"/>
<dbReference type="UniPathway" id="UPA00031">
    <property type="reaction ID" value="UER00010"/>
</dbReference>
<dbReference type="Proteomes" id="UP000001992">
    <property type="component" value="Chromosome"/>
</dbReference>
<dbReference type="GO" id="GO:0005737">
    <property type="term" value="C:cytoplasm"/>
    <property type="evidence" value="ECO:0007669"/>
    <property type="project" value="UniProtKB-SubCell"/>
</dbReference>
<dbReference type="GO" id="GO:0000107">
    <property type="term" value="F:imidazoleglycerol-phosphate synthase activity"/>
    <property type="evidence" value="ECO:0007669"/>
    <property type="project" value="UniProtKB-UniRule"/>
</dbReference>
<dbReference type="GO" id="GO:0016829">
    <property type="term" value="F:lyase activity"/>
    <property type="evidence" value="ECO:0007669"/>
    <property type="project" value="UniProtKB-KW"/>
</dbReference>
<dbReference type="GO" id="GO:0000105">
    <property type="term" value="P:L-histidine biosynthetic process"/>
    <property type="evidence" value="ECO:0007669"/>
    <property type="project" value="UniProtKB-UniRule"/>
</dbReference>
<dbReference type="CDD" id="cd04731">
    <property type="entry name" value="HisF"/>
    <property type="match status" value="1"/>
</dbReference>
<dbReference type="Gene3D" id="3.20.20.70">
    <property type="entry name" value="Aldolase class I"/>
    <property type="match status" value="1"/>
</dbReference>
<dbReference type="HAMAP" id="MF_01013">
    <property type="entry name" value="HisF"/>
    <property type="match status" value="1"/>
</dbReference>
<dbReference type="InterPro" id="IPR013785">
    <property type="entry name" value="Aldolase_TIM"/>
</dbReference>
<dbReference type="InterPro" id="IPR006062">
    <property type="entry name" value="His_biosynth"/>
</dbReference>
<dbReference type="InterPro" id="IPR004651">
    <property type="entry name" value="HisF"/>
</dbReference>
<dbReference type="InterPro" id="IPR050064">
    <property type="entry name" value="IGPS_HisA/HisF"/>
</dbReference>
<dbReference type="InterPro" id="IPR011060">
    <property type="entry name" value="RibuloseP-bd_barrel"/>
</dbReference>
<dbReference type="NCBIfam" id="TIGR00735">
    <property type="entry name" value="hisF"/>
    <property type="match status" value="1"/>
</dbReference>
<dbReference type="PANTHER" id="PTHR21235:SF2">
    <property type="entry name" value="IMIDAZOLE GLYCEROL PHOSPHATE SYNTHASE HISHF"/>
    <property type="match status" value="1"/>
</dbReference>
<dbReference type="PANTHER" id="PTHR21235">
    <property type="entry name" value="IMIDAZOLE GLYCEROL PHOSPHATE SYNTHASE SUBUNIT HISF/H IGP SYNTHASE SUBUNIT HISF/H"/>
    <property type="match status" value="1"/>
</dbReference>
<dbReference type="Pfam" id="PF00977">
    <property type="entry name" value="His_biosynth"/>
    <property type="match status" value="1"/>
</dbReference>
<dbReference type="SUPFAM" id="SSF51366">
    <property type="entry name" value="Ribulose-phoshate binding barrel"/>
    <property type="match status" value="1"/>
</dbReference>
<evidence type="ECO:0000255" key="1">
    <source>
        <dbReference type="HAMAP-Rule" id="MF_01013"/>
    </source>
</evidence>
<sequence length="274" mass="29872">MLTKRIIPCLDCDLQVPEGRVVKGVEFKEIKYAGNPVDLATRYYEMGADEIVILDITASYERRATMADVIDRLTENVFIPICVGGGIRKVEDYTKMLKAGADKCSTNTAAIKNPELLTEASKVVGSQAVVVGIDAKRRYVDNPSDAPDKNVVETDEGYCWFDCSIYGGREFTGMDAIEWAVKCQELGAGEILLTSMDGDGTKEGYDIALNKAINDAIDIPVIASGGGGNPAHILDVFQKTDVSAALAASIFHFNQYSINDVKQYLKENNVPVRL</sequence>
<accession>A5UMZ1</accession>
<keyword id="KW-0028">Amino-acid biosynthesis</keyword>
<keyword id="KW-0963">Cytoplasm</keyword>
<keyword id="KW-0368">Histidine biosynthesis</keyword>
<keyword id="KW-0456">Lyase</keyword>
<organism>
    <name type="scientific">Methanobrevibacter smithii (strain ATCC 35061 / DSM 861 / OCM 144 / PS)</name>
    <dbReference type="NCBI Taxonomy" id="420247"/>
    <lineage>
        <taxon>Archaea</taxon>
        <taxon>Methanobacteriati</taxon>
        <taxon>Methanobacteriota</taxon>
        <taxon>Methanomada group</taxon>
        <taxon>Methanobacteria</taxon>
        <taxon>Methanobacteriales</taxon>
        <taxon>Methanobacteriaceae</taxon>
        <taxon>Methanobrevibacter</taxon>
    </lineage>
</organism>
<reference key="1">
    <citation type="journal article" date="2007" name="Proc. Natl. Acad. Sci. U.S.A.">
        <title>Genomic and metabolic adaptations of Methanobrevibacter smithii to the human gut.</title>
        <authorList>
            <person name="Samuel B.S."/>
            <person name="Hansen E.E."/>
            <person name="Manchester J.K."/>
            <person name="Coutinho P.M."/>
            <person name="Henrissat B."/>
            <person name="Fulton R."/>
            <person name="Latreille P."/>
            <person name="Kim K."/>
            <person name="Wilson R.K."/>
            <person name="Gordon J.I."/>
        </authorList>
    </citation>
    <scope>NUCLEOTIDE SEQUENCE [LARGE SCALE GENOMIC DNA]</scope>
    <source>
        <strain>ATCC 35061 / DSM 861 / OCM 144 / PS</strain>
    </source>
</reference>
<comment type="function">
    <text evidence="1">IGPS catalyzes the conversion of PRFAR and glutamine to IGP, AICAR and glutamate. The HisF subunit catalyzes the cyclization activity that produces IGP and AICAR from PRFAR using the ammonia provided by the HisH subunit.</text>
</comment>
<comment type="catalytic activity">
    <reaction evidence="1">
        <text>5-[(5-phospho-1-deoxy-D-ribulos-1-ylimino)methylamino]-1-(5-phospho-beta-D-ribosyl)imidazole-4-carboxamide + L-glutamine = D-erythro-1-(imidazol-4-yl)glycerol 3-phosphate + 5-amino-1-(5-phospho-beta-D-ribosyl)imidazole-4-carboxamide + L-glutamate + H(+)</text>
        <dbReference type="Rhea" id="RHEA:24793"/>
        <dbReference type="ChEBI" id="CHEBI:15378"/>
        <dbReference type="ChEBI" id="CHEBI:29985"/>
        <dbReference type="ChEBI" id="CHEBI:58278"/>
        <dbReference type="ChEBI" id="CHEBI:58359"/>
        <dbReference type="ChEBI" id="CHEBI:58475"/>
        <dbReference type="ChEBI" id="CHEBI:58525"/>
        <dbReference type="EC" id="4.3.2.10"/>
    </reaction>
</comment>
<comment type="pathway">
    <text evidence="1">Amino-acid biosynthesis; L-histidine biosynthesis; L-histidine from 5-phospho-alpha-D-ribose 1-diphosphate: step 5/9.</text>
</comment>
<comment type="subunit">
    <text evidence="1">Heterodimer of HisH and HisF.</text>
</comment>
<comment type="subcellular location">
    <subcellularLocation>
        <location evidence="1">Cytoplasm</location>
    </subcellularLocation>
</comment>
<comment type="similarity">
    <text evidence="1">Belongs to the HisA/HisF family.</text>
</comment>
<feature type="chain" id="PRO_1000063089" description="Imidazole glycerol phosphate synthase subunit HisF">
    <location>
        <begin position="1"/>
        <end position="274"/>
    </location>
</feature>
<feature type="active site" evidence="1">
    <location>
        <position position="11"/>
    </location>
</feature>
<feature type="active site" evidence="1">
    <location>
        <position position="134"/>
    </location>
</feature>
<gene>
    <name evidence="1" type="primary">hisF</name>
    <name type="ordered locus">Msm_1364</name>
</gene>
<protein>
    <recommendedName>
        <fullName evidence="1">Imidazole glycerol phosphate synthase subunit HisF</fullName>
        <ecNumber evidence="1">4.3.2.10</ecNumber>
    </recommendedName>
    <alternativeName>
        <fullName evidence="1">IGP synthase cyclase subunit</fullName>
    </alternativeName>
    <alternativeName>
        <fullName evidence="1">IGP synthase subunit HisF</fullName>
    </alternativeName>
    <alternativeName>
        <fullName evidence="1">ImGP synthase subunit HisF</fullName>
        <shortName evidence="1">IGPS subunit HisF</shortName>
    </alternativeName>
</protein>
<name>HIS6_METS3</name>
<proteinExistence type="inferred from homology"/>